<gene>
    <name evidence="1" type="primary">pyrH</name>
    <name type="ordered locus">ACIAD1372</name>
</gene>
<dbReference type="EC" id="2.7.4.22" evidence="1"/>
<dbReference type="EMBL" id="CR543861">
    <property type="protein sequence ID" value="CAG68238.1"/>
    <property type="molecule type" value="Genomic_DNA"/>
</dbReference>
<dbReference type="RefSeq" id="WP_004925672.1">
    <property type="nucleotide sequence ID" value="NC_005966.1"/>
</dbReference>
<dbReference type="SMR" id="Q6FCH3"/>
<dbReference type="STRING" id="202950.GCA_001485005_01129"/>
<dbReference type="GeneID" id="45233787"/>
<dbReference type="KEGG" id="aci:ACIAD1372"/>
<dbReference type="eggNOG" id="COG0528">
    <property type="taxonomic scope" value="Bacteria"/>
</dbReference>
<dbReference type="HOGENOM" id="CLU_033861_0_0_6"/>
<dbReference type="OrthoDB" id="9807458at2"/>
<dbReference type="BioCyc" id="ASP62977:ACIAD_RS06325-MONOMER"/>
<dbReference type="UniPathway" id="UPA00159">
    <property type="reaction ID" value="UER00275"/>
</dbReference>
<dbReference type="Proteomes" id="UP000000430">
    <property type="component" value="Chromosome"/>
</dbReference>
<dbReference type="GO" id="GO:0005829">
    <property type="term" value="C:cytosol"/>
    <property type="evidence" value="ECO:0007669"/>
    <property type="project" value="TreeGrafter"/>
</dbReference>
<dbReference type="GO" id="GO:0005524">
    <property type="term" value="F:ATP binding"/>
    <property type="evidence" value="ECO:0007669"/>
    <property type="project" value="UniProtKB-KW"/>
</dbReference>
<dbReference type="GO" id="GO:0033862">
    <property type="term" value="F:UMP kinase activity"/>
    <property type="evidence" value="ECO:0007669"/>
    <property type="project" value="UniProtKB-EC"/>
</dbReference>
<dbReference type="GO" id="GO:0044210">
    <property type="term" value="P:'de novo' CTP biosynthetic process"/>
    <property type="evidence" value="ECO:0007669"/>
    <property type="project" value="UniProtKB-UniRule"/>
</dbReference>
<dbReference type="GO" id="GO:0006225">
    <property type="term" value="P:UDP biosynthetic process"/>
    <property type="evidence" value="ECO:0007669"/>
    <property type="project" value="TreeGrafter"/>
</dbReference>
<dbReference type="CDD" id="cd04254">
    <property type="entry name" value="AAK_UMPK-PyrH-Ec"/>
    <property type="match status" value="1"/>
</dbReference>
<dbReference type="FunFam" id="3.40.1160.10:FF:000001">
    <property type="entry name" value="Uridylate kinase"/>
    <property type="match status" value="1"/>
</dbReference>
<dbReference type="Gene3D" id="3.40.1160.10">
    <property type="entry name" value="Acetylglutamate kinase-like"/>
    <property type="match status" value="1"/>
</dbReference>
<dbReference type="HAMAP" id="MF_01220_B">
    <property type="entry name" value="PyrH_B"/>
    <property type="match status" value="1"/>
</dbReference>
<dbReference type="InterPro" id="IPR036393">
    <property type="entry name" value="AceGlu_kinase-like_sf"/>
</dbReference>
<dbReference type="InterPro" id="IPR001048">
    <property type="entry name" value="Asp/Glu/Uridylate_kinase"/>
</dbReference>
<dbReference type="InterPro" id="IPR011817">
    <property type="entry name" value="Uridylate_kinase"/>
</dbReference>
<dbReference type="InterPro" id="IPR015963">
    <property type="entry name" value="Uridylate_kinase_bac"/>
</dbReference>
<dbReference type="NCBIfam" id="TIGR02075">
    <property type="entry name" value="pyrH_bact"/>
    <property type="match status" value="1"/>
</dbReference>
<dbReference type="PANTHER" id="PTHR42833">
    <property type="entry name" value="URIDYLATE KINASE"/>
    <property type="match status" value="1"/>
</dbReference>
<dbReference type="PANTHER" id="PTHR42833:SF4">
    <property type="entry name" value="URIDYLATE KINASE PUMPKIN, CHLOROPLASTIC"/>
    <property type="match status" value="1"/>
</dbReference>
<dbReference type="Pfam" id="PF00696">
    <property type="entry name" value="AA_kinase"/>
    <property type="match status" value="1"/>
</dbReference>
<dbReference type="PIRSF" id="PIRSF005650">
    <property type="entry name" value="Uridylate_kin"/>
    <property type="match status" value="1"/>
</dbReference>
<dbReference type="SUPFAM" id="SSF53633">
    <property type="entry name" value="Carbamate kinase-like"/>
    <property type="match status" value="1"/>
</dbReference>
<sequence length="242" mass="26103">MAETNSPRYSRILLKLSGEALSGNKDMGIDAQVLDQMSLSIAHLVGLGVQVGIVVGGGNLYRGSQLQKDGLVGRVTGDQMGMLATVMNGLAMRDALVRRNIKTRLMSALSIGTVVEPYSSRDAIRYLSQGEVCVFVAGTGNPFFTTDTAACLRGIEIEANLILKATKVDGVYNKDPSKYDDAVKYDNLTFDQVLDEKLGVMDLTAICLCRDHNVPLQVFDMNKPGALLSVIMGEKEGTHVTK</sequence>
<name>PYRH_ACIAD</name>
<reference key="1">
    <citation type="journal article" date="2004" name="Nucleic Acids Res.">
        <title>Unique features revealed by the genome sequence of Acinetobacter sp. ADP1, a versatile and naturally transformation competent bacterium.</title>
        <authorList>
            <person name="Barbe V."/>
            <person name="Vallenet D."/>
            <person name="Fonknechten N."/>
            <person name="Kreimeyer A."/>
            <person name="Oztas S."/>
            <person name="Labarre L."/>
            <person name="Cruveiller S."/>
            <person name="Robert C."/>
            <person name="Duprat S."/>
            <person name="Wincker P."/>
            <person name="Ornston L.N."/>
            <person name="Weissenbach J."/>
            <person name="Marliere P."/>
            <person name="Cohen G.N."/>
            <person name="Medigue C."/>
        </authorList>
    </citation>
    <scope>NUCLEOTIDE SEQUENCE [LARGE SCALE GENOMIC DNA]</scope>
    <source>
        <strain>ATCC 33305 / BD413 / ADP1</strain>
    </source>
</reference>
<proteinExistence type="inferred from homology"/>
<comment type="function">
    <text evidence="1">Catalyzes the reversible phosphorylation of UMP to UDP.</text>
</comment>
<comment type="catalytic activity">
    <reaction evidence="1">
        <text>UMP + ATP = UDP + ADP</text>
        <dbReference type="Rhea" id="RHEA:24400"/>
        <dbReference type="ChEBI" id="CHEBI:30616"/>
        <dbReference type="ChEBI" id="CHEBI:57865"/>
        <dbReference type="ChEBI" id="CHEBI:58223"/>
        <dbReference type="ChEBI" id="CHEBI:456216"/>
        <dbReference type="EC" id="2.7.4.22"/>
    </reaction>
</comment>
<comment type="activity regulation">
    <text evidence="1">Inhibited by UTP.</text>
</comment>
<comment type="pathway">
    <text evidence="1">Pyrimidine metabolism; CTP biosynthesis via de novo pathway; UDP from UMP (UMPK route): step 1/1.</text>
</comment>
<comment type="subunit">
    <text evidence="1">Homohexamer.</text>
</comment>
<comment type="subcellular location">
    <subcellularLocation>
        <location evidence="1">Cytoplasm</location>
    </subcellularLocation>
</comment>
<comment type="similarity">
    <text evidence="1">Belongs to the UMP kinase family.</text>
</comment>
<accession>Q6FCH3</accession>
<organism>
    <name type="scientific">Acinetobacter baylyi (strain ATCC 33305 / BD413 / ADP1)</name>
    <dbReference type="NCBI Taxonomy" id="62977"/>
    <lineage>
        <taxon>Bacteria</taxon>
        <taxon>Pseudomonadati</taxon>
        <taxon>Pseudomonadota</taxon>
        <taxon>Gammaproteobacteria</taxon>
        <taxon>Moraxellales</taxon>
        <taxon>Moraxellaceae</taxon>
        <taxon>Acinetobacter</taxon>
    </lineage>
</organism>
<feature type="chain" id="PRO_0000323779" description="Uridylate kinase">
    <location>
        <begin position="1"/>
        <end position="242"/>
    </location>
</feature>
<feature type="binding site" evidence="1">
    <location>
        <begin position="15"/>
        <end position="18"/>
    </location>
    <ligand>
        <name>ATP</name>
        <dbReference type="ChEBI" id="CHEBI:30616"/>
    </ligand>
</feature>
<feature type="binding site" evidence="1">
    <location>
        <position position="57"/>
    </location>
    <ligand>
        <name>UMP</name>
        <dbReference type="ChEBI" id="CHEBI:57865"/>
    </ligand>
</feature>
<feature type="binding site" evidence="1">
    <location>
        <position position="58"/>
    </location>
    <ligand>
        <name>ATP</name>
        <dbReference type="ChEBI" id="CHEBI:30616"/>
    </ligand>
</feature>
<feature type="binding site" evidence="1">
    <location>
        <position position="62"/>
    </location>
    <ligand>
        <name>ATP</name>
        <dbReference type="ChEBI" id="CHEBI:30616"/>
    </ligand>
</feature>
<feature type="binding site" evidence="1">
    <location>
        <position position="78"/>
    </location>
    <ligand>
        <name>UMP</name>
        <dbReference type="ChEBI" id="CHEBI:57865"/>
    </ligand>
</feature>
<feature type="binding site" evidence="1">
    <location>
        <begin position="139"/>
        <end position="146"/>
    </location>
    <ligand>
        <name>UMP</name>
        <dbReference type="ChEBI" id="CHEBI:57865"/>
    </ligand>
</feature>
<feature type="binding site" evidence="1">
    <location>
        <position position="166"/>
    </location>
    <ligand>
        <name>ATP</name>
        <dbReference type="ChEBI" id="CHEBI:30616"/>
    </ligand>
</feature>
<feature type="binding site" evidence="1">
    <location>
        <position position="172"/>
    </location>
    <ligand>
        <name>ATP</name>
        <dbReference type="ChEBI" id="CHEBI:30616"/>
    </ligand>
</feature>
<feature type="binding site" evidence="1">
    <location>
        <position position="175"/>
    </location>
    <ligand>
        <name>ATP</name>
        <dbReference type="ChEBI" id="CHEBI:30616"/>
    </ligand>
</feature>
<evidence type="ECO:0000255" key="1">
    <source>
        <dbReference type="HAMAP-Rule" id="MF_01220"/>
    </source>
</evidence>
<keyword id="KW-0067">ATP-binding</keyword>
<keyword id="KW-0963">Cytoplasm</keyword>
<keyword id="KW-0418">Kinase</keyword>
<keyword id="KW-0547">Nucleotide-binding</keyword>
<keyword id="KW-0665">Pyrimidine biosynthesis</keyword>
<keyword id="KW-0808">Transferase</keyword>
<protein>
    <recommendedName>
        <fullName evidence="1">Uridylate kinase</fullName>
        <shortName evidence="1">UK</shortName>
        <ecNumber evidence="1">2.7.4.22</ecNumber>
    </recommendedName>
    <alternativeName>
        <fullName evidence="1">Uridine monophosphate kinase</fullName>
        <shortName evidence="1">UMP kinase</shortName>
        <shortName evidence="1">UMPK</shortName>
    </alternativeName>
</protein>